<name>RPOZ_NITSB</name>
<dbReference type="EC" id="2.7.7.6" evidence="1"/>
<dbReference type="EMBL" id="AP009178">
    <property type="protein sequence ID" value="BAF69871.1"/>
    <property type="molecule type" value="Genomic_DNA"/>
</dbReference>
<dbReference type="RefSeq" id="WP_012082134.1">
    <property type="nucleotide sequence ID" value="NC_009662.1"/>
</dbReference>
<dbReference type="SMR" id="A6Q312"/>
<dbReference type="STRING" id="387092.NIS_0759"/>
<dbReference type="KEGG" id="nis:NIS_0759"/>
<dbReference type="eggNOG" id="COG1758">
    <property type="taxonomic scope" value="Bacteria"/>
</dbReference>
<dbReference type="HOGENOM" id="CLU_125406_3_0_7"/>
<dbReference type="InParanoid" id="A6Q312"/>
<dbReference type="OrthoDB" id="5334728at2"/>
<dbReference type="Proteomes" id="UP000001118">
    <property type="component" value="Chromosome"/>
</dbReference>
<dbReference type="GO" id="GO:0000428">
    <property type="term" value="C:DNA-directed RNA polymerase complex"/>
    <property type="evidence" value="ECO:0007669"/>
    <property type="project" value="UniProtKB-KW"/>
</dbReference>
<dbReference type="GO" id="GO:0003677">
    <property type="term" value="F:DNA binding"/>
    <property type="evidence" value="ECO:0007669"/>
    <property type="project" value="UniProtKB-UniRule"/>
</dbReference>
<dbReference type="GO" id="GO:0003899">
    <property type="term" value="F:DNA-directed RNA polymerase activity"/>
    <property type="evidence" value="ECO:0007669"/>
    <property type="project" value="UniProtKB-UniRule"/>
</dbReference>
<dbReference type="GO" id="GO:0006351">
    <property type="term" value="P:DNA-templated transcription"/>
    <property type="evidence" value="ECO:0007669"/>
    <property type="project" value="UniProtKB-UniRule"/>
</dbReference>
<dbReference type="Gene3D" id="3.90.940.10">
    <property type="match status" value="1"/>
</dbReference>
<dbReference type="HAMAP" id="MF_00366">
    <property type="entry name" value="RNApol_bact_RpoZ"/>
    <property type="match status" value="1"/>
</dbReference>
<dbReference type="InterPro" id="IPR003716">
    <property type="entry name" value="DNA-dir_RNA_pol_omega"/>
</dbReference>
<dbReference type="InterPro" id="IPR006110">
    <property type="entry name" value="Pol_omega/Rpo6/RPB6"/>
</dbReference>
<dbReference type="InterPro" id="IPR036161">
    <property type="entry name" value="RPB6/omega-like_sf"/>
</dbReference>
<dbReference type="NCBIfam" id="NF001579">
    <property type="entry name" value="PRK00392.6-2"/>
    <property type="match status" value="1"/>
</dbReference>
<dbReference type="NCBIfam" id="TIGR00690">
    <property type="entry name" value="rpoZ"/>
    <property type="match status" value="1"/>
</dbReference>
<dbReference type="Pfam" id="PF01192">
    <property type="entry name" value="RNA_pol_Rpb6"/>
    <property type="match status" value="1"/>
</dbReference>
<dbReference type="SMART" id="SM01409">
    <property type="entry name" value="RNA_pol_Rpb6"/>
    <property type="match status" value="1"/>
</dbReference>
<dbReference type="SUPFAM" id="SSF63562">
    <property type="entry name" value="RPB6/omega subunit-like"/>
    <property type="match status" value="1"/>
</dbReference>
<sequence>MRLEKIAAKALENVGFDRYLLSIAVAKRANELATGKEPLVEVDVKKYKYTDIALMEIAEGKLKIEVEKES</sequence>
<proteinExistence type="inferred from homology"/>
<feature type="chain" id="PRO_1000079637" description="DNA-directed RNA polymerase subunit omega">
    <location>
        <begin position="1"/>
        <end position="70"/>
    </location>
</feature>
<organism>
    <name type="scientific">Nitratiruptor sp. (strain SB155-2)</name>
    <dbReference type="NCBI Taxonomy" id="387092"/>
    <lineage>
        <taxon>Bacteria</taxon>
        <taxon>Pseudomonadati</taxon>
        <taxon>Campylobacterota</taxon>
        <taxon>Epsilonproteobacteria</taxon>
        <taxon>Nautiliales</taxon>
        <taxon>Nitratiruptoraceae</taxon>
        <taxon>Nitratiruptor</taxon>
    </lineage>
</organism>
<accession>A6Q312</accession>
<keyword id="KW-0240">DNA-directed RNA polymerase</keyword>
<keyword id="KW-0548">Nucleotidyltransferase</keyword>
<keyword id="KW-1185">Reference proteome</keyword>
<keyword id="KW-0804">Transcription</keyword>
<keyword id="KW-0808">Transferase</keyword>
<reference key="1">
    <citation type="journal article" date="2007" name="Proc. Natl. Acad. Sci. U.S.A.">
        <title>Deep-sea vent epsilon-proteobacterial genomes provide insights into emergence of pathogens.</title>
        <authorList>
            <person name="Nakagawa S."/>
            <person name="Takaki Y."/>
            <person name="Shimamura S."/>
            <person name="Reysenbach A.-L."/>
            <person name="Takai K."/>
            <person name="Horikoshi K."/>
        </authorList>
    </citation>
    <scope>NUCLEOTIDE SEQUENCE [LARGE SCALE GENOMIC DNA]</scope>
    <source>
        <strain>SB155-2</strain>
    </source>
</reference>
<protein>
    <recommendedName>
        <fullName evidence="1">DNA-directed RNA polymerase subunit omega</fullName>
        <shortName evidence="1">RNAP omega subunit</shortName>
        <ecNumber evidence="1">2.7.7.6</ecNumber>
    </recommendedName>
    <alternativeName>
        <fullName evidence="1">RNA polymerase omega subunit</fullName>
    </alternativeName>
    <alternativeName>
        <fullName evidence="1">Transcriptase subunit omega</fullName>
    </alternativeName>
</protein>
<comment type="function">
    <text evidence="1">Promotes RNA polymerase assembly. Latches the N- and C-terminal regions of the beta' subunit thereby facilitating its interaction with the beta and alpha subunits.</text>
</comment>
<comment type="catalytic activity">
    <reaction evidence="1">
        <text>RNA(n) + a ribonucleoside 5'-triphosphate = RNA(n+1) + diphosphate</text>
        <dbReference type="Rhea" id="RHEA:21248"/>
        <dbReference type="Rhea" id="RHEA-COMP:14527"/>
        <dbReference type="Rhea" id="RHEA-COMP:17342"/>
        <dbReference type="ChEBI" id="CHEBI:33019"/>
        <dbReference type="ChEBI" id="CHEBI:61557"/>
        <dbReference type="ChEBI" id="CHEBI:140395"/>
        <dbReference type="EC" id="2.7.7.6"/>
    </reaction>
</comment>
<comment type="subunit">
    <text evidence="1">The RNAP catalytic core consists of 2 alpha, 1 beta, 1 beta' and 1 omega subunit. When a sigma factor is associated with the core the holoenzyme is formed, which can initiate transcription.</text>
</comment>
<comment type="similarity">
    <text evidence="1">Belongs to the RNA polymerase subunit omega family.</text>
</comment>
<gene>
    <name evidence="1" type="primary">rpoZ</name>
    <name type="ordered locus">NIS_0759</name>
</gene>
<evidence type="ECO:0000255" key="1">
    <source>
        <dbReference type="HAMAP-Rule" id="MF_00366"/>
    </source>
</evidence>